<comment type="function">
    <text evidence="1">Together with AlgJ and AlgF, forms an inner membrane complex which probably interacts with the alginate polymerization-transport complex and adds acetyl groups at the O-2 and O-3 positions of mannuronate residues. Acetylation of alginate is important for the architecture of biofilms and increases the ability of alginate to act as a defense barrier (By similarity).</text>
</comment>
<comment type="pathway">
    <text>Glycan biosynthesis; alginate biosynthesis.</text>
</comment>
<comment type="subcellular location">
    <subcellularLocation>
        <location evidence="1">Cell inner membrane</location>
        <topology evidence="1">Multi-pass membrane protein</topology>
    </subcellularLocation>
</comment>
<comment type="similarity">
    <text evidence="4">Belongs to the membrane-bound acyltransferase family.</text>
</comment>
<evidence type="ECO:0000250" key="1"/>
<evidence type="ECO:0000255" key="2"/>
<evidence type="ECO:0000256" key="3">
    <source>
        <dbReference type="SAM" id="MobiDB-lite"/>
    </source>
</evidence>
<evidence type="ECO:0000305" key="4"/>
<feature type="chain" id="PRO_0000213127" description="Probable alginate O-acetylase AlgI">
    <location>
        <begin position="1"/>
        <end position="518"/>
    </location>
</feature>
<feature type="transmembrane region" description="Helical" evidence="2">
    <location>
        <begin position="2"/>
        <end position="24"/>
    </location>
</feature>
<feature type="transmembrane region" description="Helical" evidence="2">
    <location>
        <begin position="39"/>
        <end position="61"/>
    </location>
</feature>
<feature type="transmembrane region" description="Helical" evidence="2">
    <location>
        <begin position="78"/>
        <end position="100"/>
    </location>
</feature>
<feature type="transmembrane region" description="Helical" evidence="2">
    <location>
        <begin position="115"/>
        <end position="137"/>
    </location>
</feature>
<feature type="transmembrane region" description="Helical" evidence="2">
    <location>
        <begin position="150"/>
        <end position="172"/>
    </location>
</feature>
<feature type="transmembrane region" description="Helical" evidence="2">
    <location>
        <begin position="319"/>
        <end position="341"/>
    </location>
</feature>
<feature type="transmembrane region" description="Helical" evidence="2">
    <location>
        <begin position="354"/>
        <end position="373"/>
    </location>
</feature>
<feature type="transmembrane region" description="Helical" evidence="2">
    <location>
        <begin position="402"/>
        <end position="424"/>
    </location>
</feature>
<feature type="transmembrane region" description="Helical" evidence="2">
    <location>
        <begin position="493"/>
        <end position="515"/>
    </location>
</feature>
<feature type="region of interest" description="Disordered" evidence="3">
    <location>
        <begin position="435"/>
        <end position="456"/>
    </location>
</feature>
<feature type="active site" evidence="2">
    <location>
        <position position="322"/>
    </location>
</feature>
<dbReference type="EC" id="2.3.1.-"/>
<dbReference type="EMBL" id="AE016853">
    <property type="protein sequence ID" value="AAO54760.1"/>
    <property type="molecule type" value="Genomic_DNA"/>
</dbReference>
<dbReference type="RefSeq" id="NP_791065.1">
    <property type="nucleotide sequence ID" value="NC_004578.1"/>
</dbReference>
<dbReference type="RefSeq" id="WP_005764153.1">
    <property type="nucleotide sequence ID" value="NC_004578.1"/>
</dbReference>
<dbReference type="SMR" id="Q887Q6"/>
<dbReference type="STRING" id="223283.PSPTO_1235"/>
<dbReference type="GeneID" id="1182871"/>
<dbReference type="KEGG" id="pst:PSPTO_1235"/>
<dbReference type="PATRIC" id="fig|223283.9.peg.1256"/>
<dbReference type="eggNOG" id="COG1696">
    <property type="taxonomic scope" value="Bacteria"/>
</dbReference>
<dbReference type="HOGENOM" id="CLU_025255_1_3_6"/>
<dbReference type="OrthoDB" id="139172at2"/>
<dbReference type="PhylomeDB" id="Q887Q6"/>
<dbReference type="UniPathway" id="UPA00286"/>
<dbReference type="Proteomes" id="UP000002515">
    <property type="component" value="Chromosome"/>
</dbReference>
<dbReference type="GO" id="GO:0005886">
    <property type="term" value="C:plasma membrane"/>
    <property type="evidence" value="ECO:0007669"/>
    <property type="project" value="UniProtKB-SubCell"/>
</dbReference>
<dbReference type="GO" id="GO:0016746">
    <property type="term" value="F:acyltransferase activity"/>
    <property type="evidence" value="ECO:0007669"/>
    <property type="project" value="UniProtKB-KW"/>
</dbReference>
<dbReference type="GO" id="GO:0042121">
    <property type="term" value="P:alginic acid biosynthetic process"/>
    <property type="evidence" value="ECO:0007669"/>
    <property type="project" value="UniProtKB-UniPathway"/>
</dbReference>
<dbReference type="InterPro" id="IPR024194">
    <property type="entry name" value="Ac/AlaTfrase_AlgI/DltB"/>
</dbReference>
<dbReference type="InterPro" id="IPR028362">
    <property type="entry name" value="AlgI"/>
</dbReference>
<dbReference type="InterPro" id="IPR051085">
    <property type="entry name" value="MB_O-acyltransferase"/>
</dbReference>
<dbReference type="InterPro" id="IPR004299">
    <property type="entry name" value="MBOAT_fam"/>
</dbReference>
<dbReference type="PANTHER" id="PTHR13285">
    <property type="entry name" value="ACYLTRANSFERASE"/>
    <property type="match status" value="1"/>
</dbReference>
<dbReference type="PANTHER" id="PTHR13285:SF23">
    <property type="entry name" value="TEICHOIC ACID D-ALANYLTRANSFERASE"/>
    <property type="match status" value="1"/>
</dbReference>
<dbReference type="Pfam" id="PF03062">
    <property type="entry name" value="MBOAT"/>
    <property type="match status" value="1"/>
</dbReference>
<dbReference type="PIRSF" id="PIRSF500217">
    <property type="entry name" value="AlgI"/>
    <property type="match status" value="1"/>
</dbReference>
<dbReference type="PIRSF" id="PIRSF016636">
    <property type="entry name" value="AlgI_DltB"/>
    <property type="match status" value="1"/>
</dbReference>
<reference key="1">
    <citation type="journal article" date="2003" name="Proc. Natl. Acad. Sci. U.S.A.">
        <title>The complete genome sequence of the Arabidopsis and tomato pathogen Pseudomonas syringae pv. tomato DC3000.</title>
        <authorList>
            <person name="Buell C.R."/>
            <person name="Joardar V."/>
            <person name="Lindeberg M."/>
            <person name="Selengut J."/>
            <person name="Paulsen I.T."/>
            <person name="Gwinn M.L."/>
            <person name="Dodson R.J."/>
            <person name="DeBoy R.T."/>
            <person name="Durkin A.S."/>
            <person name="Kolonay J.F."/>
            <person name="Madupu R."/>
            <person name="Daugherty S.C."/>
            <person name="Brinkac L.M."/>
            <person name="Beanan M.J."/>
            <person name="Haft D.H."/>
            <person name="Nelson W.C."/>
            <person name="Davidsen T.M."/>
            <person name="Zafar N."/>
            <person name="Zhou L."/>
            <person name="Liu J."/>
            <person name="Yuan Q."/>
            <person name="Khouri H.M."/>
            <person name="Fedorova N.B."/>
            <person name="Tran B."/>
            <person name="Russell D."/>
            <person name="Berry K.J."/>
            <person name="Utterback T.R."/>
            <person name="Van Aken S.E."/>
            <person name="Feldblyum T.V."/>
            <person name="D'Ascenzo M."/>
            <person name="Deng W.-L."/>
            <person name="Ramos A.R."/>
            <person name="Alfano J.R."/>
            <person name="Cartinhour S."/>
            <person name="Chatterjee A.K."/>
            <person name="Delaney T.P."/>
            <person name="Lazarowitz S.G."/>
            <person name="Martin G.B."/>
            <person name="Schneider D.J."/>
            <person name="Tang X."/>
            <person name="Bender C.L."/>
            <person name="White O."/>
            <person name="Fraser C.M."/>
            <person name="Collmer A."/>
        </authorList>
    </citation>
    <scope>NUCLEOTIDE SEQUENCE [LARGE SCALE GENOMIC DNA]</scope>
    <source>
        <strain>ATCC BAA-871 / DC3000</strain>
    </source>
</reference>
<protein>
    <recommendedName>
        <fullName>Probable alginate O-acetylase AlgI</fullName>
        <ecNumber>2.3.1.-</ecNumber>
    </recommendedName>
    <alternativeName>
        <fullName>Alginate biosynthesis protein AlgI</fullName>
    </alternativeName>
</protein>
<sequence length="518" mass="58606">MVFSSNVFLFMFLPIFLGLYYLSGQRYRNLLLLIASYIFYAWWRVDFLALFIGVTVWNYWIGLKVGAAGVRTKPAQRWLLLGVIVDLCILGYFKYANFGVDSINAAMTSMGLEPFILTHVLLPIGISFYVFESISYIIDVYRGDTPATRNLIDFAAFVAIFPHLIAGPVLRFRDLADQFNNRTHTLDKFSEGATRFMQGFIKKVFIADTLAIVADHCFALQNPTTGDAWLGALAYTAQLYFDFSGYSDMAIGLGLMMGFRFMENFKQPYISQSITEFWRRWHISLSTWLRDYLYITLGGNRGGKVATYRNLFLTMLLGGLWHGANVTYIIWGAWHGMWLAIEKAVGINTKPYSFNVIRWALTFLLVVIGWVIFRSENLHVAGRMYGAMFSFGDWQLSELNRASLTGLQVATLVVAYATLAFFGLRDFYQNREKDSGKSARADGPATEQPGTIKAVPGDAPGSLHLPGYTVGSEAQVQPAYWVADWPRYAMRALILLLFVASILKLSAQSFSPFLYFQF</sequence>
<gene>
    <name type="primary">algI</name>
    <name type="ordered locus">PSPTO_1235</name>
</gene>
<proteinExistence type="inferred from homology"/>
<name>ALGI_PSESM</name>
<keyword id="KW-0012">Acyltransferase</keyword>
<keyword id="KW-0016">Alginate biosynthesis</keyword>
<keyword id="KW-0997">Cell inner membrane</keyword>
<keyword id="KW-1003">Cell membrane</keyword>
<keyword id="KW-0472">Membrane</keyword>
<keyword id="KW-1185">Reference proteome</keyword>
<keyword id="KW-0808">Transferase</keyword>
<keyword id="KW-0812">Transmembrane</keyword>
<keyword id="KW-1133">Transmembrane helix</keyword>
<organism>
    <name type="scientific">Pseudomonas syringae pv. tomato (strain ATCC BAA-871 / DC3000)</name>
    <dbReference type="NCBI Taxonomy" id="223283"/>
    <lineage>
        <taxon>Bacteria</taxon>
        <taxon>Pseudomonadati</taxon>
        <taxon>Pseudomonadota</taxon>
        <taxon>Gammaproteobacteria</taxon>
        <taxon>Pseudomonadales</taxon>
        <taxon>Pseudomonadaceae</taxon>
        <taxon>Pseudomonas</taxon>
    </lineage>
</organism>
<accession>Q887Q6</accession>